<dbReference type="EC" id="3.1.2.-" evidence="6"/>
<dbReference type="EMBL" id="LC086931">
    <property type="protein sequence ID" value="BBG28510.1"/>
    <property type="molecule type" value="Genomic_DNA"/>
</dbReference>
<dbReference type="SMR" id="A0A348HAY8"/>
<dbReference type="GO" id="GO:0005737">
    <property type="term" value="C:cytoplasm"/>
    <property type="evidence" value="ECO:0007669"/>
    <property type="project" value="TreeGrafter"/>
</dbReference>
<dbReference type="GO" id="GO:0005634">
    <property type="term" value="C:nucleus"/>
    <property type="evidence" value="ECO:0007669"/>
    <property type="project" value="TreeGrafter"/>
</dbReference>
<dbReference type="GO" id="GO:0016787">
    <property type="term" value="F:hydrolase activity"/>
    <property type="evidence" value="ECO:0007669"/>
    <property type="project" value="UniProtKB-KW"/>
</dbReference>
<dbReference type="GO" id="GO:0019748">
    <property type="term" value="P:secondary metabolic process"/>
    <property type="evidence" value="ECO:0007669"/>
    <property type="project" value="TreeGrafter"/>
</dbReference>
<dbReference type="Gene3D" id="3.40.50.1820">
    <property type="entry name" value="alpha/beta hydrolase"/>
    <property type="match status" value="1"/>
</dbReference>
<dbReference type="InterPro" id="IPR029058">
    <property type="entry name" value="AB_hydrolase_fold"/>
</dbReference>
<dbReference type="InterPro" id="IPR005645">
    <property type="entry name" value="FSH-like_dom"/>
</dbReference>
<dbReference type="InterPro" id="IPR050593">
    <property type="entry name" value="LovG"/>
</dbReference>
<dbReference type="PANTHER" id="PTHR48070:SF4">
    <property type="entry name" value="ESTERASE ALNB"/>
    <property type="match status" value="1"/>
</dbReference>
<dbReference type="PANTHER" id="PTHR48070">
    <property type="entry name" value="ESTERASE OVCA2"/>
    <property type="match status" value="1"/>
</dbReference>
<dbReference type="Pfam" id="PF03959">
    <property type="entry name" value="FSH1"/>
    <property type="match status" value="2"/>
</dbReference>
<dbReference type="SUPFAM" id="SSF53474">
    <property type="entry name" value="alpha/beta-Hydrolases"/>
    <property type="match status" value="1"/>
</dbReference>
<feature type="chain" id="PRO_0000458956" description="Hydrolase phiM">
    <location>
        <begin position="1"/>
        <end position="208"/>
    </location>
</feature>
<feature type="active site" description="Charge relay system" evidence="1">
    <location>
        <position position="87"/>
    </location>
</feature>
<name>PHIM_FUNX7</name>
<reference key="1">
    <citation type="journal article" date="2015" name="Org. Lett.">
        <title>Biosynthetic study on antihypercholesterolemic agent phomoidride: general biogenesis of fungal dimeric anhydrides.</title>
        <authorList>
            <person name="Fujii R."/>
            <person name="Matsu Y."/>
            <person name="Minami A."/>
            <person name="Nagamine S."/>
            <person name="Takeuchi I."/>
            <person name="Gomi K."/>
            <person name="Oikawa H."/>
        </authorList>
    </citation>
    <scope>NUCLEOTIDE SEQUENCE [GENOMIC DNA]</scope>
    <source>
        <strain>ATCC 74256</strain>
    </source>
</reference>
<reference key="2">
    <citation type="journal article" date="1997" name="J. Antibiot.">
        <title>CP-225,917 and CP-263,114, novel Ras farnesylation inhibitors from an unidentified fungus. I. Taxonomy, fermentation, isolation, and biochemical properties.</title>
        <authorList>
            <person name="Dabrah T.T."/>
            <person name="Harwood H.J. Jr."/>
            <person name="Huang L.H."/>
            <person name="Jankovich N.D."/>
            <person name="Kaneko T."/>
            <person name="Li J.C."/>
            <person name="Lindsey S."/>
            <person name="Moshier P.M."/>
            <person name="Subashi T.A."/>
            <person name="Therrien M."/>
            <person name="Watts P.C."/>
        </authorList>
    </citation>
    <scope>BIOTECHNOLOGY</scope>
</reference>
<reference key="3">
    <citation type="journal article" date="2022" name="J. Am. Chem. Soc.">
        <title>Elucidation of late-stage biosynthesis of phomoidride: proposal of cyclization mechanism affording characteristic nine-membered ring of fungal dimeric anhydride.</title>
        <authorList>
            <person name="Yamamoto S."/>
            <person name="Matsuyama T."/>
            <person name="Ozaki T."/>
            <person name="Takino J."/>
            <person name="Sato H."/>
            <person name="Uchiyama M."/>
            <person name="Minami A."/>
            <person name="Oikawa H."/>
        </authorList>
    </citation>
    <scope>FUNCTION</scope>
</reference>
<comment type="function">
    <text evidence="2 6">Hydrolase; part of the gene cluster that mediates the biosynthesis of the antihypercholesterolemic agents phomoidrides which are dimeric anhydrides (PubMed:26558485). Within the pathway, phiM releases the C12-fatty acyl chain from phiA (Probable). The pathway begins with the highly reducing polyketide synthase phiA that catalyzes the formation of a C12-fatty acyl-ACP, starting from one acetate and 5 malonate units. The hydrolase phiM is involved in the release of the C12-fatty acyl chain from phiA. The alkylcitrate synthase (ACS) phiJ and the alkylcitrate dehydratase (ACDH) phiI then give rise to decarboxylated monomeric anhydrides by coupling the C12-fatty acyl chain with oxalacetic acid. The cyclase phiC is responsible for the dimerization of the monomeric anhydrides which leads to the production of prephomoidride that contains the characteristic bicyclo[4.3.1]deca-1,6-diene system of phomoidrides. Iterative oxidation catalyzed by the alpha-ketoglutarate-dependent dioxygenase phiK produced then phomoidride A. Finally, the methyltransferase phiE converts phomoidride A to phomoidride B via an acetalization reaction. The phosphatidylethanolamine-binding protein phiB and phiN are not essential for dimerization and their functions have still to be determined (Probable).</text>
</comment>
<comment type="pathway">
    <text evidence="6">Secondary metabolite biosynthesis.</text>
</comment>
<comment type="biotechnology">
    <text evidence="3">Phomoidrides A and B (also known as CP-225,917 and CP-263,114) are potent inhibitors of Ras farnesyltransferase and squalene synthase (PubMed:9066758). CP-225,917 and CP-263,114 inhibit Ras farnesyl transferase from rat brain with IC(50) values of 6 uM and 20 uoM, respectively (PubMed:9066758). CP-225,917 inhibits squalene synthase with an IC(50) value of 43 uM and CP-263,114 with an IC(50) of 160 uM (PubMed:9066758).</text>
</comment>
<comment type="similarity">
    <text evidence="5">Belongs to the LovG family.</text>
</comment>
<accession>A0A348HAY8</accession>
<sequence length="208" mass="22908">MPGLRILCLHGQGSNTEIMKAQLGPITKLLKQNGVATFEWLEGTIPTEAGPGVSGVFEDEQSIREACEDLEDYLEENGPYDGILGFSQGSTLLAEFLCDFARRNPGNEPPCRCAIFMNGIPPYRMGDDEKPIIDYGLLEHFPSIPTLHVVGKKDFVYEYSTILQASTASAWATLIAHEKGHEISNDTRIVQKINSAFEQMSIRIALGC</sequence>
<organism>
    <name type="scientific">Fungal sp. (strain ATCC 74256)</name>
    <dbReference type="NCBI Taxonomy" id="1729595"/>
    <lineage>
        <taxon>Eukaryota</taxon>
        <taxon>Fungi</taxon>
    </lineage>
</organism>
<evidence type="ECO:0000250" key="1">
    <source>
        <dbReference type="UniProtKB" id="P38777"/>
    </source>
</evidence>
<evidence type="ECO:0000269" key="2">
    <source>
    </source>
</evidence>
<evidence type="ECO:0000269" key="3">
    <source>
    </source>
</evidence>
<evidence type="ECO:0000303" key="4">
    <source>
    </source>
</evidence>
<evidence type="ECO:0000305" key="5"/>
<evidence type="ECO:0000305" key="6">
    <source>
    </source>
</evidence>
<gene>
    <name evidence="4" type="primary">phiM</name>
</gene>
<proteinExistence type="evidence at protein level"/>
<protein>
    <recommendedName>
        <fullName evidence="4">Hydrolase phiM</fullName>
        <ecNumber evidence="6">3.1.2.-</ecNumber>
    </recommendedName>
    <alternativeName>
        <fullName evidence="4">Phomoidride biosynthesis cluster protein M</fullName>
    </alternativeName>
</protein>
<keyword id="KW-0378">Hydrolase</keyword>